<keyword id="KW-0067">ATP-binding</keyword>
<keyword id="KW-0547">Nucleotide-binding</keyword>
<keyword id="KW-0548">Nucleotidyltransferase</keyword>
<keyword id="KW-1185">Reference proteome</keyword>
<keyword id="KW-0808">Transferase</keyword>
<protein>
    <recommendedName>
        <fullName evidence="1">Sulfate adenylyltransferase subunit 2</fullName>
        <ecNumber evidence="1">2.7.7.4</ecNumber>
    </recommendedName>
    <alternativeName>
        <fullName evidence="1">ATP-sulfurylase small subunit</fullName>
    </alternativeName>
    <alternativeName>
        <fullName evidence="1">Sulfate adenylate transferase</fullName>
        <shortName evidence="1">SAT</shortName>
    </alternativeName>
</protein>
<dbReference type="EC" id="2.7.7.4" evidence="1"/>
<dbReference type="EMBL" id="FM180568">
    <property type="protein sequence ID" value="CAS10570.1"/>
    <property type="molecule type" value="Genomic_DNA"/>
</dbReference>
<dbReference type="RefSeq" id="WP_000372392.1">
    <property type="nucleotide sequence ID" value="NC_011601.1"/>
</dbReference>
<dbReference type="SMR" id="B7UHH1"/>
<dbReference type="GeneID" id="89517568"/>
<dbReference type="KEGG" id="ecg:E2348C_3022"/>
<dbReference type="HOGENOM" id="CLU_043026_0_0_6"/>
<dbReference type="UniPathway" id="UPA00140">
    <property type="reaction ID" value="UER00204"/>
</dbReference>
<dbReference type="Proteomes" id="UP000008205">
    <property type="component" value="Chromosome"/>
</dbReference>
<dbReference type="GO" id="GO:0005524">
    <property type="term" value="F:ATP binding"/>
    <property type="evidence" value="ECO:0007669"/>
    <property type="project" value="UniProtKB-KW"/>
</dbReference>
<dbReference type="GO" id="GO:0004781">
    <property type="term" value="F:sulfate adenylyltransferase (ATP) activity"/>
    <property type="evidence" value="ECO:0007669"/>
    <property type="project" value="UniProtKB-UniRule"/>
</dbReference>
<dbReference type="GO" id="GO:0070814">
    <property type="term" value="P:hydrogen sulfide biosynthetic process"/>
    <property type="evidence" value="ECO:0007669"/>
    <property type="project" value="UniProtKB-UniRule"/>
</dbReference>
<dbReference type="GO" id="GO:0000103">
    <property type="term" value="P:sulfate assimilation"/>
    <property type="evidence" value="ECO:0007669"/>
    <property type="project" value="UniProtKB-UniRule"/>
</dbReference>
<dbReference type="CDD" id="cd23946">
    <property type="entry name" value="Sulfate_adenylyltransferase_2"/>
    <property type="match status" value="1"/>
</dbReference>
<dbReference type="FunFam" id="3.40.50.620:FF:000002">
    <property type="entry name" value="Sulfate adenylyltransferase subunit 2"/>
    <property type="match status" value="1"/>
</dbReference>
<dbReference type="Gene3D" id="3.40.50.620">
    <property type="entry name" value="HUPs"/>
    <property type="match status" value="1"/>
</dbReference>
<dbReference type="HAMAP" id="MF_00064">
    <property type="entry name" value="Sulf_adenylyltr_sub2"/>
    <property type="match status" value="1"/>
</dbReference>
<dbReference type="InterPro" id="IPR002500">
    <property type="entry name" value="PAPS_reduct_dom"/>
</dbReference>
<dbReference type="InterPro" id="IPR014729">
    <property type="entry name" value="Rossmann-like_a/b/a_fold"/>
</dbReference>
<dbReference type="InterPro" id="IPR011784">
    <property type="entry name" value="SO4_adenylTrfase_ssu"/>
</dbReference>
<dbReference type="InterPro" id="IPR050128">
    <property type="entry name" value="Sulfate_adenylyltrnsfr_sub2"/>
</dbReference>
<dbReference type="NCBIfam" id="TIGR02039">
    <property type="entry name" value="CysD"/>
    <property type="match status" value="1"/>
</dbReference>
<dbReference type="NCBIfam" id="NF003587">
    <property type="entry name" value="PRK05253.1"/>
    <property type="match status" value="1"/>
</dbReference>
<dbReference type="NCBIfam" id="NF009214">
    <property type="entry name" value="PRK12563.1"/>
    <property type="match status" value="1"/>
</dbReference>
<dbReference type="PANTHER" id="PTHR43196">
    <property type="entry name" value="SULFATE ADENYLYLTRANSFERASE SUBUNIT 2"/>
    <property type="match status" value="1"/>
</dbReference>
<dbReference type="PANTHER" id="PTHR43196:SF1">
    <property type="entry name" value="SULFATE ADENYLYLTRANSFERASE SUBUNIT 2"/>
    <property type="match status" value="1"/>
</dbReference>
<dbReference type="Pfam" id="PF01507">
    <property type="entry name" value="PAPS_reduct"/>
    <property type="match status" value="1"/>
</dbReference>
<dbReference type="PIRSF" id="PIRSF002936">
    <property type="entry name" value="CysDAde_trans"/>
    <property type="match status" value="1"/>
</dbReference>
<dbReference type="SUPFAM" id="SSF52402">
    <property type="entry name" value="Adenine nucleotide alpha hydrolases-like"/>
    <property type="match status" value="1"/>
</dbReference>
<organism>
    <name type="scientific">Escherichia coli O127:H6 (strain E2348/69 / EPEC)</name>
    <dbReference type="NCBI Taxonomy" id="574521"/>
    <lineage>
        <taxon>Bacteria</taxon>
        <taxon>Pseudomonadati</taxon>
        <taxon>Pseudomonadota</taxon>
        <taxon>Gammaproteobacteria</taxon>
        <taxon>Enterobacterales</taxon>
        <taxon>Enterobacteriaceae</taxon>
        <taxon>Escherichia</taxon>
    </lineage>
</organism>
<gene>
    <name evidence="1" type="primary">cysD</name>
    <name type="ordered locus">E2348C_3022</name>
</gene>
<feature type="chain" id="PRO_1000117939" description="Sulfate adenylyltransferase subunit 2">
    <location>
        <begin position="1"/>
        <end position="302"/>
    </location>
</feature>
<name>CYSD_ECO27</name>
<accession>B7UHH1</accession>
<reference key="1">
    <citation type="journal article" date="2009" name="J. Bacteriol.">
        <title>Complete genome sequence and comparative genome analysis of enteropathogenic Escherichia coli O127:H6 strain E2348/69.</title>
        <authorList>
            <person name="Iguchi A."/>
            <person name="Thomson N.R."/>
            <person name="Ogura Y."/>
            <person name="Saunders D."/>
            <person name="Ooka T."/>
            <person name="Henderson I.R."/>
            <person name="Harris D."/>
            <person name="Asadulghani M."/>
            <person name="Kurokawa K."/>
            <person name="Dean P."/>
            <person name="Kenny B."/>
            <person name="Quail M.A."/>
            <person name="Thurston S."/>
            <person name="Dougan G."/>
            <person name="Hayashi T."/>
            <person name="Parkhill J."/>
            <person name="Frankel G."/>
        </authorList>
    </citation>
    <scope>NUCLEOTIDE SEQUENCE [LARGE SCALE GENOMIC DNA]</scope>
    <source>
        <strain>E2348/69 / EPEC</strain>
    </source>
</reference>
<comment type="function">
    <text evidence="1">With CysN forms the ATP sulfurylase (ATPS) that catalyzes the adenylation of sulfate producing adenosine 5'-phosphosulfate (APS) and diphosphate, the first enzymatic step in sulfur assimilation pathway. APS synthesis involves the formation of a high-energy phosphoric-sulfuric acid anhydride bond driven by GTP hydrolysis by CysN coupled to ATP hydrolysis by CysD.</text>
</comment>
<comment type="catalytic activity">
    <reaction evidence="1">
        <text>sulfate + ATP + H(+) = adenosine 5'-phosphosulfate + diphosphate</text>
        <dbReference type="Rhea" id="RHEA:18133"/>
        <dbReference type="ChEBI" id="CHEBI:15378"/>
        <dbReference type="ChEBI" id="CHEBI:16189"/>
        <dbReference type="ChEBI" id="CHEBI:30616"/>
        <dbReference type="ChEBI" id="CHEBI:33019"/>
        <dbReference type="ChEBI" id="CHEBI:58243"/>
        <dbReference type="EC" id="2.7.7.4"/>
    </reaction>
</comment>
<comment type="pathway">
    <text evidence="1">Sulfur metabolism; hydrogen sulfide biosynthesis; sulfite from sulfate: step 1/3.</text>
</comment>
<comment type="subunit">
    <text evidence="1">Heterodimer composed of CysD, the smaller subunit, and CysN.</text>
</comment>
<comment type="similarity">
    <text evidence="1">Belongs to the PAPS reductase family. CysD subfamily.</text>
</comment>
<evidence type="ECO:0000255" key="1">
    <source>
        <dbReference type="HAMAP-Rule" id="MF_00064"/>
    </source>
</evidence>
<proteinExistence type="inferred from homology"/>
<sequence>MDQKRLTHLRQLEAESIHIIREVAAEFSNPVMLYSIGKDSSVMLHLARKAFYPGTLPFPLLHVDTGWKFREMYEFRDRTAKAYGCELLVHKNPEGVAMGINPFVHGSAKHTDIMKTEGLKQALNKYGFDAAFGGARRDEEKSRAKERIYSFRDRFHRWDPKNQRPELWHNYNGQINKGESIRVFPLSNWTEQDIWQYIWLENIDIVPLYLAAERPVLERDGMLMMIDDNRIDLQPGEVIKKRMVRFRTLGCWPLTGAVESNAQTLPEIIEEMLVSTTSERQGRVIDRDQAGSMELKKRQGYF</sequence>